<organism>
    <name type="scientific">Rickettsia bellii (strain RML369-C)</name>
    <dbReference type="NCBI Taxonomy" id="336407"/>
    <lineage>
        <taxon>Bacteria</taxon>
        <taxon>Pseudomonadati</taxon>
        <taxon>Pseudomonadota</taxon>
        <taxon>Alphaproteobacteria</taxon>
        <taxon>Rickettsiales</taxon>
        <taxon>Rickettsiaceae</taxon>
        <taxon>Rickettsieae</taxon>
        <taxon>Rickettsia</taxon>
        <taxon>belli group</taxon>
    </lineage>
</organism>
<name>LPXB_RICBR</name>
<proteinExistence type="inferred from homology"/>
<keyword id="KW-0328">Glycosyltransferase</keyword>
<keyword id="KW-0441">Lipid A biosynthesis</keyword>
<keyword id="KW-0444">Lipid biosynthesis</keyword>
<keyword id="KW-0443">Lipid metabolism</keyword>
<keyword id="KW-0808">Transferase</keyword>
<evidence type="ECO:0000255" key="1">
    <source>
        <dbReference type="HAMAP-Rule" id="MF_00392"/>
    </source>
</evidence>
<reference key="1">
    <citation type="journal article" date="2006" name="PLoS Genet.">
        <title>Genome sequence of Rickettsia bellii illuminates the role of amoebae in gene exchanges between intracellular pathogens.</title>
        <authorList>
            <person name="Ogata H."/>
            <person name="La Scola B."/>
            <person name="Audic S."/>
            <person name="Renesto P."/>
            <person name="Blanc G."/>
            <person name="Robert C."/>
            <person name="Fournier P.-E."/>
            <person name="Claverie J.-M."/>
            <person name="Raoult D."/>
        </authorList>
    </citation>
    <scope>NUCLEOTIDE SEQUENCE [LARGE SCALE GENOMIC DNA]</scope>
    <source>
        <strain>RML369-C</strain>
    </source>
</reference>
<feature type="chain" id="PRO_0000255217" description="Lipid-A-disaccharide synthase">
    <location>
        <begin position="1"/>
        <end position="381"/>
    </location>
</feature>
<dbReference type="EC" id="2.4.1.182" evidence="1"/>
<dbReference type="EMBL" id="CP000087">
    <property type="protein sequence ID" value="ABE04893.1"/>
    <property type="molecule type" value="Genomic_DNA"/>
</dbReference>
<dbReference type="RefSeq" id="WP_011477480.1">
    <property type="nucleotide sequence ID" value="NC_007940.1"/>
</dbReference>
<dbReference type="SMR" id="Q1RIC1"/>
<dbReference type="CAZy" id="GT19">
    <property type="family name" value="Glycosyltransferase Family 19"/>
</dbReference>
<dbReference type="KEGG" id="rbe:RBE_0812"/>
<dbReference type="eggNOG" id="COG0763">
    <property type="taxonomic scope" value="Bacteria"/>
</dbReference>
<dbReference type="HOGENOM" id="CLU_036577_2_0_5"/>
<dbReference type="OrthoDB" id="9801642at2"/>
<dbReference type="UniPathway" id="UPA00973"/>
<dbReference type="Proteomes" id="UP000001951">
    <property type="component" value="Chromosome"/>
</dbReference>
<dbReference type="GO" id="GO:0016020">
    <property type="term" value="C:membrane"/>
    <property type="evidence" value="ECO:0007669"/>
    <property type="project" value="GOC"/>
</dbReference>
<dbReference type="GO" id="GO:0008915">
    <property type="term" value="F:lipid-A-disaccharide synthase activity"/>
    <property type="evidence" value="ECO:0007669"/>
    <property type="project" value="UniProtKB-UniRule"/>
</dbReference>
<dbReference type="GO" id="GO:0005543">
    <property type="term" value="F:phospholipid binding"/>
    <property type="evidence" value="ECO:0007669"/>
    <property type="project" value="TreeGrafter"/>
</dbReference>
<dbReference type="GO" id="GO:0009245">
    <property type="term" value="P:lipid A biosynthetic process"/>
    <property type="evidence" value="ECO:0007669"/>
    <property type="project" value="UniProtKB-UniRule"/>
</dbReference>
<dbReference type="HAMAP" id="MF_00392">
    <property type="entry name" value="LpxB"/>
    <property type="match status" value="1"/>
</dbReference>
<dbReference type="InterPro" id="IPR003835">
    <property type="entry name" value="Glyco_trans_19"/>
</dbReference>
<dbReference type="NCBIfam" id="TIGR00215">
    <property type="entry name" value="lpxB"/>
    <property type="match status" value="1"/>
</dbReference>
<dbReference type="PANTHER" id="PTHR30372">
    <property type="entry name" value="LIPID-A-DISACCHARIDE SYNTHASE"/>
    <property type="match status" value="1"/>
</dbReference>
<dbReference type="PANTHER" id="PTHR30372:SF4">
    <property type="entry name" value="LIPID-A-DISACCHARIDE SYNTHASE, MITOCHONDRIAL-RELATED"/>
    <property type="match status" value="1"/>
</dbReference>
<dbReference type="Pfam" id="PF02684">
    <property type="entry name" value="LpxB"/>
    <property type="match status" value="1"/>
</dbReference>
<dbReference type="SUPFAM" id="SSF53756">
    <property type="entry name" value="UDP-Glycosyltransferase/glycogen phosphorylase"/>
    <property type="match status" value="1"/>
</dbReference>
<protein>
    <recommendedName>
        <fullName evidence="1">Lipid-A-disaccharide synthase</fullName>
        <ecNumber evidence="1">2.4.1.182</ecNumber>
    </recommendedName>
</protein>
<gene>
    <name evidence="1" type="primary">lpxB</name>
    <name type="ordered locus">RBE_0812</name>
</gene>
<accession>Q1RIC1</accession>
<comment type="function">
    <text evidence="1">Condensation of UDP-2,3-diacylglucosamine and 2,3-diacylglucosamine-1-phosphate to form lipid A disaccharide, a precursor of lipid A, a phosphorylated glycolipid that anchors the lipopolysaccharide to the outer membrane of the cell.</text>
</comment>
<comment type="catalytic activity">
    <reaction evidence="1">
        <text>a lipid X + a UDP-2-N,3-O-bis[(3R)-3-hydroxyacyl]-alpha-D-glucosamine = a lipid A disaccharide + UDP + H(+)</text>
        <dbReference type="Rhea" id="RHEA:67828"/>
        <dbReference type="ChEBI" id="CHEBI:15378"/>
        <dbReference type="ChEBI" id="CHEBI:58223"/>
        <dbReference type="ChEBI" id="CHEBI:137748"/>
        <dbReference type="ChEBI" id="CHEBI:176338"/>
        <dbReference type="ChEBI" id="CHEBI:176343"/>
        <dbReference type="EC" id="2.4.1.182"/>
    </reaction>
</comment>
<comment type="pathway">
    <text evidence="1">Bacterial outer membrane biogenesis; LPS lipid A biosynthesis.</text>
</comment>
<comment type="similarity">
    <text evidence="1">Belongs to the LpxB family.</text>
</comment>
<sequence>MKKIYFIAGEASGDFAGGRIIRNLKADKELKIIGIGGRNMEEAGNFESLFPISEINLMGFFEVIPHIFRIKKLINKTVEDIIDNKPDILITIDSPGFTYRVAAKVRERLPELKMIHIVAPSVWAYKEGRAAKYAKIYNCLFALLPFEPPYFTKVGLDCRYIGHPIMEQEFYSDKVALRQELEIDEDTKVLCVTLGSRKGEILRHLPIFIPAIEKVYDDHKKKLMVIFPLANPDHERIIKPFLEKVRFNYIFSYERLKSYAVSDLALAKSGTNTLEIAASGTPMIVAYKVNIFSFIIIRLLIKIKYVTLINIIGNREIIPEFIQFNCEANLISDKLKELLLNPQEVDKQITESHKILQELGFKSNIYPSYLATKIIRQEFLK</sequence>